<keyword id="KW-0325">Glycoprotein</keyword>
<keyword id="KW-0349">Heme</keyword>
<keyword id="KW-0408">Iron</keyword>
<keyword id="KW-0479">Metal-binding</keyword>
<keyword id="KW-0503">Monooxygenase</keyword>
<keyword id="KW-0560">Oxidoreductase</keyword>
<keyword id="KW-0732">Signal</keyword>
<proteinExistence type="evidence at protein level"/>
<reference key="1">
    <citation type="journal article" date="2015" name="Genome Announc.">
        <title>Genome sequence of Aspergillus flavus NRRL 3357, a strain that causes aflatoxin contamination of food and feed.</title>
        <authorList>
            <person name="Nierman W.C."/>
            <person name="Yu J."/>
            <person name="Fedorova-Abrams N.D."/>
            <person name="Losada L."/>
            <person name="Cleveland T.E."/>
            <person name="Bhatnagar D."/>
            <person name="Bennett J.W."/>
            <person name="Dean R."/>
            <person name="Payne G.A."/>
        </authorList>
    </citation>
    <scope>NUCLEOTIDE SEQUENCE [LARGE SCALE GENOMIC DNA]</scope>
    <source>
        <strain>ATCC 200026 / FGSC A1120 / IAM 13836 / NRRL 3357 / JCM 12722 / SRRC 167</strain>
    </source>
</reference>
<reference key="2">
    <citation type="journal article" date="2014" name="Fungal Genet. Biol.">
        <title>Characterization of the biosynthetic gene cluster for the ribosomally synthesized cyclic peptide ustiloxin B in Aspergillus flavus.</title>
        <authorList>
            <person name="Umemura M."/>
            <person name="Nagano N."/>
            <person name="Koike H."/>
            <person name="Kawano J."/>
            <person name="Ishii T."/>
            <person name="Miyamura Y."/>
            <person name="Kikuchi M."/>
            <person name="Tamano K."/>
            <person name="Yu J."/>
            <person name="Shin-ya K."/>
            <person name="Machida M."/>
        </authorList>
    </citation>
    <scope>FUNCTION</scope>
    <scope>DISRUPTION PHENOTYPE</scope>
</reference>
<reference key="3">
    <citation type="journal article" date="2016" name="Angew. Chem. Int. Ed.">
        <title>Unveiling the biosynthetic pathway of the ribosomally synthesized and post-translationally modified peptide ustiloxin B in filamentous fungi.</title>
        <authorList>
            <person name="Ye Y."/>
            <person name="Minami A."/>
            <person name="Igarashi Y."/>
            <person name="Izumikawa M."/>
            <person name="Umemura M."/>
            <person name="Nagano N."/>
            <person name="Machida M."/>
            <person name="Kawahara T."/>
            <person name="Shin-Ya K."/>
            <person name="Gomi K."/>
            <person name="Oikawa H."/>
        </authorList>
    </citation>
    <scope>FUNCTION</scope>
    <scope>DISRUPTION PHENOTYPE</scope>
    <scope>CATALYTIC ACTIVITY</scope>
</reference>
<reference key="4">
    <citation type="journal article" date="2016" name="Fungal Genet. Biol.">
        <title>Class of cyclic ribosomal peptide synthetic genes in filamentous fungi.</title>
        <authorList>
            <person name="Nagano N."/>
            <person name="Umemura M."/>
            <person name="Izumikawa M."/>
            <person name="Kawano J."/>
            <person name="Ishii T."/>
            <person name="Kikuchi M."/>
            <person name="Tomii K."/>
            <person name="Kumagai T."/>
            <person name="Yoshimi A."/>
            <person name="Machida M."/>
            <person name="Abe K."/>
            <person name="Shin-ya K."/>
            <person name="Asai K."/>
        </authorList>
    </citation>
    <scope>FUNCTION</scope>
    <scope>DISRUPTION PHENOTYPE</scope>
</reference>
<gene>
    <name evidence="7" type="primary">ustC</name>
    <name type="ORF">AFLA_094960</name>
</gene>
<feature type="signal peptide" evidence="2">
    <location>
        <begin position="1"/>
        <end position="18"/>
    </location>
</feature>
<feature type="chain" id="PRO_0000437300" description="Cytochrome P450 monooxygenase ustC">
    <location>
        <begin position="19"/>
        <end position="403"/>
    </location>
</feature>
<feature type="binding site" description="axial binding residue" evidence="1">
    <location>
        <position position="318"/>
    </location>
    <ligand>
        <name>heme</name>
        <dbReference type="ChEBI" id="CHEBI:30413"/>
    </ligand>
    <ligandPart>
        <name>Fe</name>
        <dbReference type="ChEBI" id="CHEBI:18248"/>
    </ligandPart>
</feature>
<feature type="glycosylation site" description="N-linked (GlcNAc...) asparagine" evidence="3">
    <location>
        <position position="52"/>
    </location>
</feature>
<feature type="glycosylation site" description="N-linked (GlcNAc...) asparagine" evidence="3">
    <location>
        <position position="92"/>
    </location>
</feature>
<comment type="function">
    <text evidence="4 5 6">Cytochrome P450 monooxygenase; part of the gene cluster that mediates the biosynthesis of the secondary metabolite ustiloxin B, an antimitotic tetrapeptide (PubMed:24841822, PubMed:26703898, PubMed:27166860). First, ustA is processed by the subtilisin-like endoprotease Kex2 that is outside the ustiloxin B gene cluster, at the C-terminal side of Arg-Lys, after transfer to Golgi apparatus through the endoplasmic reticulum (ER) (PubMed:24841822). Cleavage by KEX2 generates 16 peptides YAIG-I to YAIG-XVI (PubMed:24841822). To process the precursor peptide further, at least two peptidases are necessary to cleave the N-terminal and C-terminal sides of the Tyr-Ala-Ile-Gly core peptide which serves as backbone for the synthesis of ustiloxin B, through cyclization and modification of the tyrosine with a non-protein coding amino acid, norvaline (PubMed:24841822). One of the two peptidases must be the serine peptidase ustP; and the other pepdidase is probably ustH (PubMed:24841822). Macrocyclization of the core peptide derived from ustA requires the tyrosinase ustQ, as well as the homologous oxidases ustYa and ustYb, and leads to the production of the first cyclization product N-desmethylustiloxin F (PubMed:26703898, PubMed:27166860). For the formation of N-desmethylustiloxin F, three oxidation steps are required, hydroxylation at the benzylic position, hydroxylation at either the aromatic ring of Tyr or beta-position of Ile, and oxidative cyclization (PubMed:27166860). UstQ may catalyze the oxidation of a phenol moiety, whereas the ustYa and ustYb are most likely responsible for the remaining two-step oxidations (PubMed:27166860). N-desmethylustiloxin F is then methylated by ustM to yield ustiloxin F which in turn substrate of the cytochrome P450 monooxygenase ustC which catalyzes the formation of S-deoxyustiloxin H (PubMed:27166860). The flavoprotein monooxygenases ustF1 and ustF2 then participate in the modification of the side chain of S-deoxyustiloxin H, leading to the synthesis of an oxime intermediate, via ustiloxin H (PubMed:27166860). Finally, carboxylative dehydration performed by the cysteine desulfurase-like protein ustD yields ustiloxin B (PubMed:27166860).</text>
</comment>
<comment type="cofactor">
    <cofactor evidence="1">
        <name>heme</name>
        <dbReference type="ChEBI" id="CHEBI:30413"/>
    </cofactor>
</comment>
<comment type="pathway">
    <text evidence="4">Mycotoxin biosynthesis.</text>
</comment>
<comment type="disruption phenotype">
    <text evidence="4 6">Impairs the production of ustiloxin B but accumulates intermediates such as ustiloxin F and C (PubMed:24841822, PubMed:26703898, PubMed:27166860).</text>
</comment>
<comment type="similarity">
    <text evidence="8">Belongs to the cytochrome P450 family.</text>
</comment>
<dbReference type="EC" id="1.-.-.-" evidence="9"/>
<dbReference type="EMBL" id="EQ963480">
    <property type="protein sequence ID" value="EED49415.1"/>
    <property type="molecule type" value="Genomic_DNA"/>
</dbReference>
<dbReference type="RefSeq" id="XP_002381316.1">
    <property type="nucleotide sequence ID" value="XM_002381275.1"/>
</dbReference>
<dbReference type="SMR" id="B8NM64"/>
<dbReference type="STRING" id="332952.B8NM64"/>
<dbReference type="GlyCosmos" id="B8NM64">
    <property type="glycosylation" value="2 sites, No reported glycans"/>
</dbReference>
<dbReference type="EnsemblFungi" id="EED49415">
    <property type="protein sequence ID" value="EED49415"/>
    <property type="gene ID" value="AFLA_094960"/>
</dbReference>
<dbReference type="VEuPathDB" id="FungiDB:AFLA_006409"/>
<dbReference type="VEuPathDB" id="FungiDB:AFLA_009733"/>
<dbReference type="eggNOG" id="KOG0157">
    <property type="taxonomic scope" value="Eukaryota"/>
</dbReference>
<dbReference type="HOGENOM" id="CLU_001570_14_0_1"/>
<dbReference type="OMA" id="LAFFRTE"/>
<dbReference type="GO" id="GO:0020037">
    <property type="term" value="F:heme binding"/>
    <property type="evidence" value="ECO:0007669"/>
    <property type="project" value="InterPro"/>
</dbReference>
<dbReference type="GO" id="GO:0005506">
    <property type="term" value="F:iron ion binding"/>
    <property type="evidence" value="ECO:0007669"/>
    <property type="project" value="InterPro"/>
</dbReference>
<dbReference type="GO" id="GO:0004497">
    <property type="term" value="F:monooxygenase activity"/>
    <property type="evidence" value="ECO:0007669"/>
    <property type="project" value="UniProtKB-KW"/>
</dbReference>
<dbReference type="GO" id="GO:0016705">
    <property type="term" value="F:oxidoreductase activity, acting on paired donors, with incorporation or reduction of molecular oxygen"/>
    <property type="evidence" value="ECO:0007669"/>
    <property type="project" value="InterPro"/>
</dbReference>
<dbReference type="Gene3D" id="1.10.630.10">
    <property type="entry name" value="Cytochrome P450"/>
    <property type="match status" value="2"/>
</dbReference>
<dbReference type="InterPro" id="IPR001128">
    <property type="entry name" value="Cyt_P450"/>
</dbReference>
<dbReference type="InterPro" id="IPR017972">
    <property type="entry name" value="Cyt_P450_CS"/>
</dbReference>
<dbReference type="InterPro" id="IPR036396">
    <property type="entry name" value="Cyt_P450_sf"/>
</dbReference>
<dbReference type="InterPro" id="IPR050121">
    <property type="entry name" value="Cytochrome_P450_monoxygenase"/>
</dbReference>
<dbReference type="PANTHER" id="PTHR24305">
    <property type="entry name" value="CYTOCHROME P450"/>
    <property type="match status" value="1"/>
</dbReference>
<dbReference type="PANTHER" id="PTHR24305:SF85">
    <property type="entry name" value="P450, PUTATIVE (EUROFUNG)-RELATED"/>
    <property type="match status" value="1"/>
</dbReference>
<dbReference type="Pfam" id="PF00067">
    <property type="entry name" value="p450"/>
    <property type="match status" value="1"/>
</dbReference>
<dbReference type="SUPFAM" id="SSF48264">
    <property type="entry name" value="Cytochrome P450"/>
    <property type="match status" value="1"/>
</dbReference>
<dbReference type="PROSITE" id="PS00086">
    <property type="entry name" value="CYTOCHROME_P450"/>
    <property type="match status" value="1"/>
</dbReference>
<accession>B8NM64</accession>
<evidence type="ECO:0000250" key="1">
    <source>
        <dbReference type="UniProtKB" id="P04798"/>
    </source>
</evidence>
<evidence type="ECO:0000255" key="2"/>
<evidence type="ECO:0000255" key="3">
    <source>
        <dbReference type="PROSITE-ProRule" id="PRU00498"/>
    </source>
</evidence>
<evidence type="ECO:0000269" key="4">
    <source>
    </source>
</evidence>
<evidence type="ECO:0000269" key="5">
    <source>
    </source>
</evidence>
<evidence type="ECO:0000269" key="6">
    <source>
    </source>
</evidence>
<evidence type="ECO:0000303" key="7">
    <source>
    </source>
</evidence>
<evidence type="ECO:0000305" key="8"/>
<evidence type="ECO:0000305" key="9">
    <source>
    </source>
</evidence>
<organism>
    <name type="scientific">Aspergillus flavus (strain ATCC 200026 / FGSC A1120 / IAM 13836 / NRRL 3357 / JCM 12722 / SRRC 167)</name>
    <dbReference type="NCBI Taxonomy" id="332952"/>
    <lineage>
        <taxon>Eukaryota</taxon>
        <taxon>Fungi</taxon>
        <taxon>Dikarya</taxon>
        <taxon>Ascomycota</taxon>
        <taxon>Pezizomycotina</taxon>
        <taxon>Eurotiomycetes</taxon>
        <taxon>Eurotiomycetidae</taxon>
        <taxon>Eurotiales</taxon>
        <taxon>Aspergillaceae</taxon>
        <taxon>Aspergillus</taxon>
        <taxon>Aspergillus subgen. Circumdati</taxon>
    </lineage>
</organism>
<name>USTC_ASPFN</name>
<sequence length="403" mass="46402">MSPFIFAVTLTFAILALGILRRRYFHPLSRFPGPFLGSVTSLYQTYWHVHPNKTLHDTELHRKYGPIVRYSPNGLIVNDPALLPVIYNRRANKTDFYAPVFDTHSTFTRKDYREHVASRKAISHAVGFLAFFRTEYSYGLVLLMIIFKQYSVTNTRLFEPQVDGILSELAGSSVTPSQLARVIFHISRNFKVQEKLYEELVAAEQDGRIPPLSAIISDEQAHRLPFLSACIREAQRYAPTMSQLPRYAPEGTGLELHEQYVPPGTSVSTSPWIIGRNKDLYGEDANSFRPERWLEASPEEERRWDHFSFHFGYGARKCLANNFGLMQLYKVAAEVCAYPIRCLLRYRAHHECRYFVVLKLKLKGRTRIQSVEGRLRVPGFALIAEQDPGHKHNGYINMDLFRA</sequence>
<protein>
    <recommendedName>
        <fullName evidence="7">Cytochrome P450 monooxygenase ustC</fullName>
        <ecNumber evidence="9">1.-.-.-</ecNumber>
    </recommendedName>
    <alternativeName>
        <fullName evidence="7">Ustiloxin B biosynthesis protein C</fullName>
    </alternativeName>
</protein>